<protein>
    <recommendedName>
        <fullName evidence="1">ATP synthase subunit b</fullName>
    </recommendedName>
    <alternativeName>
        <fullName evidence="1">ATP synthase F(0) sector subunit b</fullName>
    </alternativeName>
    <alternativeName>
        <fullName evidence="1">ATPase subunit I</fullName>
    </alternativeName>
    <alternativeName>
        <fullName evidence="1">F-type ATPase subunit b</fullName>
        <shortName evidence="1">F-ATPase subunit b</shortName>
    </alternativeName>
</protein>
<feature type="chain" id="PRO_0000368834" description="ATP synthase subunit b">
    <location>
        <begin position="1"/>
        <end position="173"/>
    </location>
</feature>
<feature type="transmembrane region" description="Helical" evidence="1">
    <location>
        <begin position="12"/>
        <end position="34"/>
    </location>
</feature>
<dbReference type="EMBL" id="CP000448">
    <property type="protein sequence ID" value="ABI69675.1"/>
    <property type="molecule type" value="Genomic_DNA"/>
</dbReference>
<dbReference type="SMR" id="Q0AUC9"/>
<dbReference type="STRING" id="335541.Swol_2386"/>
<dbReference type="KEGG" id="swo:Swol_2386"/>
<dbReference type="eggNOG" id="COG0711">
    <property type="taxonomic scope" value="Bacteria"/>
</dbReference>
<dbReference type="HOGENOM" id="CLU_079215_4_4_9"/>
<dbReference type="OrthoDB" id="9795863at2"/>
<dbReference type="Proteomes" id="UP000001968">
    <property type="component" value="Chromosome"/>
</dbReference>
<dbReference type="GO" id="GO:0005886">
    <property type="term" value="C:plasma membrane"/>
    <property type="evidence" value="ECO:0007669"/>
    <property type="project" value="UniProtKB-SubCell"/>
</dbReference>
<dbReference type="GO" id="GO:0045259">
    <property type="term" value="C:proton-transporting ATP synthase complex"/>
    <property type="evidence" value="ECO:0007669"/>
    <property type="project" value="UniProtKB-KW"/>
</dbReference>
<dbReference type="GO" id="GO:0046933">
    <property type="term" value="F:proton-transporting ATP synthase activity, rotational mechanism"/>
    <property type="evidence" value="ECO:0007669"/>
    <property type="project" value="UniProtKB-UniRule"/>
</dbReference>
<dbReference type="GO" id="GO:0046961">
    <property type="term" value="F:proton-transporting ATPase activity, rotational mechanism"/>
    <property type="evidence" value="ECO:0007669"/>
    <property type="project" value="TreeGrafter"/>
</dbReference>
<dbReference type="CDD" id="cd06503">
    <property type="entry name" value="ATP-synt_Fo_b"/>
    <property type="match status" value="1"/>
</dbReference>
<dbReference type="Gene3D" id="6.10.250.1580">
    <property type="match status" value="1"/>
</dbReference>
<dbReference type="HAMAP" id="MF_01398">
    <property type="entry name" value="ATP_synth_b_bprime"/>
    <property type="match status" value="1"/>
</dbReference>
<dbReference type="InterPro" id="IPR028987">
    <property type="entry name" value="ATP_synth_B-like_membr_sf"/>
</dbReference>
<dbReference type="InterPro" id="IPR002146">
    <property type="entry name" value="ATP_synth_b/b'su_bac/chlpt"/>
</dbReference>
<dbReference type="InterPro" id="IPR005864">
    <property type="entry name" value="ATP_synth_F0_bsu_bac"/>
</dbReference>
<dbReference type="InterPro" id="IPR050059">
    <property type="entry name" value="ATP_synthase_B_chain"/>
</dbReference>
<dbReference type="NCBIfam" id="TIGR01144">
    <property type="entry name" value="ATP_synt_b"/>
    <property type="match status" value="1"/>
</dbReference>
<dbReference type="PANTHER" id="PTHR33445:SF1">
    <property type="entry name" value="ATP SYNTHASE SUBUNIT B"/>
    <property type="match status" value="1"/>
</dbReference>
<dbReference type="PANTHER" id="PTHR33445">
    <property type="entry name" value="ATP SYNTHASE SUBUNIT B', CHLOROPLASTIC"/>
    <property type="match status" value="1"/>
</dbReference>
<dbReference type="Pfam" id="PF00430">
    <property type="entry name" value="ATP-synt_B"/>
    <property type="match status" value="1"/>
</dbReference>
<dbReference type="SUPFAM" id="SSF81573">
    <property type="entry name" value="F1F0 ATP synthase subunit B, membrane domain"/>
    <property type="match status" value="1"/>
</dbReference>
<organism>
    <name type="scientific">Syntrophomonas wolfei subsp. wolfei (strain DSM 2245B / Goettingen)</name>
    <dbReference type="NCBI Taxonomy" id="335541"/>
    <lineage>
        <taxon>Bacteria</taxon>
        <taxon>Bacillati</taxon>
        <taxon>Bacillota</taxon>
        <taxon>Clostridia</taxon>
        <taxon>Eubacteriales</taxon>
        <taxon>Syntrophomonadaceae</taxon>
        <taxon>Syntrophomonas</taxon>
    </lineage>
</organism>
<accession>Q0AUC9</accession>
<name>ATPF_SYNWW</name>
<proteinExistence type="inferred from homology"/>
<keyword id="KW-0066">ATP synthesis</keyword>
<keyword id="KW-1003">Cell membrane</keyword>
<keyword id="KW-0138">CF(0)</keyword>
<keyword id="KW-0375">Hydrogen ion transport</keyword>
<keyword id="KW-0406">Ion transport</keyword>
<keyword id="KW-0472">Membrane</keyword>
<keyword id="KW-1185">Reference proteome</keyword>
<keyword id="KW-0812">Transmembrane</keyword>
<keyword id="KW-1133">Transmembrane helix</keyword>
<keyword id="KW-0813">Transport</keyword>
<gene>
    <name evidence="1" type="primary">atpF</name>
    <name type="ordered locus">Swol_2386</name>
</gene>
<evidence type="ECO:0000255" key="1">
    <source>
        <dbReference type="HAMAP-Rule" id="MF_01398"/>
    </source>
</evidence>
<sequence length="173" mass="18938">MPVPQPDGKTPAFGNLYAIGWSAVNFLVLLALMYKFAYGPINNMLEQRTNAIEGSLKHAEEVKLEVEQMRKETASNLAESRKEAQEIVARATKAAEESKNEIIAKAKEESTLIKNKAAAEIQAATEQAKLELKDSAVSLAILAAEKVLSRAINDDDHKNLVKQFVNEAGDLLC</sequence>
<reference key="1">
    <citation type="journal article" date="2010" name="Environ. Microbiol.">
        <title>The genome of Syntrophomonas wolfei: new insights into syntrophic metabolism and biohydrogen production.</title>
        <authorList>
            <person name="Sieber J.R."/>
            <person name="Sims D.R."/>
            <person name="Han C."/>
            <person name="Kim E."/>
            <person name="Lykidis A."/>
            <person name="Lapidus A.L."/>
            <person name="McDonnald E."/>
            <person name="Rohlin L."/>
            <person name="Culley D.E."/>
            <person name="Gunsalus R."/>
            <person name="McInerney M.J."/>
        </authorList>
    </citation>
    <scope>NUCLEOTIDE SEQUENCE [LARGE SCALE GENOMIC DNA]</scope>
    <source>
        <strain>DSM 2245B / Goettingen</strain>
    </source>
</reference>
<comment type="function">
    <text evidence="1">F(1)F(0) ATP synthase produces ATP from ADP in the presence of a proton or sodium gradient. F-type ATPases consist of two structural domains, F(1) containing the extramembraneous catalytic core and F(0) containing the membrane proton channel, linked together by a central stalk and a peripheral stalk. During catalysis, ATP synthesis in the catalytic domain of F(1) is coupled via a rotary mechanism of the central stalk subunits to proton translocation.</text>
</comment>
<comment type="function">
    <text evidence="1">Component of the F(0) channel, it forms part of the peripheral stalk, linking F(1) to F(0).</text>
</comment>
<comment type="subunit">
    <text evidence="1">F-type ATPases have 2 components, F(1) - the catalytic core - and F(0) - the membrane proton channel. F(1) has five subunits: alpha(3), beta(3), gamma(1), delta(1), epsilon(1). F(0) has three main subunits: a(1), b(2) and c(10-14). The alpha and beta chains form an alternating ring which encloses part of the gamma chain. F(1) is attached to F(0) by a central stalk formed by the gamma and epsilon chains, while a peripheral stalk is formed by the delta and b chains.</text>
</comment>
<comment type="subcellular location">
    <subcellularLocation>
        <location evidence="1">Cell membrane</location>
        <topology evidence="1">Single-pass membrane protein</topology>
    </subcellularLocation>
</comment>
<comment type="similarity">
    <text evidence="1">Belongs to the ATPase B chain family.</text>
</comment>